<comment type="function">
    <text evidence="1">Catalyzes the prenylation of para-hydroxybenzoate (PHB) with an all-trans polyprenyl group. Mediates the second step in the final reaction sequence of ubiquinone-8 (UQ-8) biosynthesis, which is the condensation of the polyisoprenoid side chain with PHB, generating the first membrane-bound Q intermediate 3-octaprenyl-4-hydroxybenzoate.</text>
</comment>
<comment type="catalytic activity">
    <reaction evidence="1">
        <text>all-trans-octaprenyl diphosphate + 4-hydroxybenzoate = 4-hydroxy-3-(all-trans-octaprenyl)benzoate + diphosphate</text>
        <dbReference type="Rhea" id="RHEA:27782"/>
        <dbReference type="ChEBI" id="CHEBI:1617"/>
        <dbReference type="ChEBI" id="CHEBI:17879"/>
        <dbReference type="ChEBI" id="CHEBI:33019"/>
        <dbReference type="ChEBI" id="CHEBI:57711"/>
        <dbReference type="EC" id="2.5.1.39"/>
    </reaction>
</comment>
<comment type="cofactor">
    <cofactor evidence="1">
        <name>Mg(2+)</name>
        <dbReference type="ChEBI" id="CHEBI:18420"/>
    </cofactor>
</comment>
<comment type="pathway">
    <text evidence="1">Cofactor biosynthesis; ubiquinone biosynthesis.</text>
</comment>
<comment type="subcellular location">
    <subcellularLocation>
        <location evidence="1">Cell inner membrane</location>
        <topology evidence="1">Multi-pass membrane protein</topology>
    </subcellularLocation>
</comment>
<comment type="similarity">
    <text evidence="1">Belongs to the UbiA prenyltransferase family.</text>
</comment>
<organism>
    <name type="scientific">Shewanella putrefaciens (strain CN-32 / ATCC BAA-453)</name>
    <dbReference type="NCBI Taxonomy" id="319224"/>
    <lineage>
        <taxon>Bacteria</taxon>
        <taxon>Pseudomonadati</taxon>
        <taxon>Pseudomonadota</taxon>
        <taxon>Gammaproteobacteria</taxon>
        <taxon>Alteromonadales</taxon>
        <taxon>Shewanellaceae</taxon>
        <taxon>Shewanella</taxon>
    </lineage>
</organism>
<protein>
    <recommendedName>
        <fullName evidence="1">4-hydroxybenzoate octaprenyltransferase</fullName>
        <ecNumber evidence="1">2.5.1.39</ecNumber>
    </recommendedName>
    <alternativeName>
        <fullName evidence="1">4-HB polyprenyltransferase</fullName>
    </alternativeName>
</protein>
<gene>
    <name evidence="1" type="primary">ubiA</name>
    <name type="ordered locus">Sputcn32_3372</name>
</gene>
<keyword id="KW-0997">Cell inner membrane</keyword>
<keyword id="KW-1003">Cell membrane</keyword>
<keyword id="KW-0460">Magnesium</keyword>
<keyword id="KW-0472">Membrane</keyword>
<keyword id="KW-0808">Transferase</keyword>
<keyword id="KW-0812">Transmembrane</keyword>
<keyword id="KW-1133">Transmembrane helix</keyword>
<keyword id="KW-0831">Ubiquinone biosynthesis</keyword>
<sequence length="286" mass="31959">MNLKQKWDVYSRLTRLDRPIGTLLLMWPCLMALMLAAGGMPDLKVLIIFIIGVVIMRACGCIINDYADRDLDSFVERTKSRPLASGEISTKEALILFVVLGLSAFGLVLLLNGLVVKLSVVGIILTIIYPFTKRITNMPQMFLGVVWSWSIPMAYAAQTGEVPMEAWWLFAANWFWTVAYDTMYAMVDRDDDLKVGIKSTAILFGKYDRQIIGLFQIAALVCFIAAGWSAERGLLYGLGLLTFVGFSTYQQMLIFGRERAPCFKAFLNNNWAGLALFVGLGADYLI</sequence>
<proteinExistence type="inferred from homology"/>
<dbReference type="EC" id="2.5.1.39" evidence="1"/>
<dbReference type="EMBL" id="CP000681">
    <property type="protein sequence ID" value="ABP77084.1"/>
    <property type="molecule type" value="Genomic_DNA"/>
</dbReference>
<dbReference type="SMR" id="A4YAV1"/>
<dbReference type="STRING" id="319224.Sputcn32_3372"/>
<dbReference type="KEGG" id="spc:Sputcn32_3372"/>
<dbReference type="eggNOG" id="COG0382">
    <property type="taxonomic scope" value="Bacteria"/>
</dbReference>
<dbReference type="HOGENOM" id="CLU_034879_1_0_6"/>
<dbReference type="UniPathway" id="UPA00232"/>
<dbReference type="GO" id="GO:0005886">
    <property type="term" value="C:plasma membrane"/>
    <property type="evidence" value="ECO:0007669"/>
    <property type="project" value="UniProtKB-SubCell"/>
</dbReference>
<dbReference type="GO" id="GO:0008412">
    <property type="term" value="F:4-hydroxybenzoate polyprenyltransferase activity"/>
    <property type="evidence" value="ECO:0007669"/>
    <property type="project" value="UniProtKB-UniRule"/>
</dbReference>
<dbReference type="GO" id="GO:0006744">
    <property type="term" value="P:ubiquinone biosynthetic process"/>
    <property type="evidence" value="ECO:0007669"/>
    <property type="project" value="UniProtKB-UniRule"/>
</dbReference>
<dbReference type="CDD" id="cd13959">
    <property type="entry name" value="PT_UbiA_COQ2"/>
    <property type="match status" value="1"/>
</dbReference>
<dbReference type="FunFam" id="1.10.357.140:FF:000002">
    <property type="entry name" value="4-hydroxybenzoate octaprenyltransferase"/>
    <property type="match status" value="1"/>
</dbReference>
<dbReference type="FunFam" id="1.20.120.1780:FF:000001">
    <property type="entry name" value="4-hydroxybenzoate octaprenyltransferase"/>
    <property type="match status" value="1"/>
</dbReference>
<dbReference type="Gene3D" id="1.10.357.140">
    <property type="entry name" value="UbiA prenyltransferase"/>
    <property type="match status" value="1"/>
</dbReference>
<dbReference type="Gene3D" id="1.20.120.1780">
    <property type="entry name" value="UbiA prenyltransferase"/>
    <property type="match status" value="1"/>
</dbReference>
<dbReference type="HAMAP" id="MF_01635">
    <property type="entry name" value="UbiA"/>
    <property type="match status" value="1"/>
</dbReference>
<dbReference type="InterPro" id="IPR006370">
    <property type="entry name" value="HB_polyprenyltransferase-like"/>
</dbReference>
<dbReference type="InterPro" id="IPR039653">
    <property type="entry name" value="Prenyltransferase"/>
</dbReference>
<dbReference type="InterPro" id="IPR000537">
    <property type="entry name" value="UbiA_prenyltransferase"/>
</dbReference>
<dbReference type="InterPro" id="IPR030470">
    <property type="entry name" value="UbiA_prenylTrfase_CS"/>
</dbReference>
<dbReference type="InterPro" id="IPR044878">
    <property type="entry name" value="UbiA_sf"/>
</dbReference>
<dbReference type="NCBIfam" id="TIGR01474">
    <property type="entry name" value="ubiA_proteo"/>
    <property type="match status" value="1"/>
</dbReference>
<dbReference type="PANTHER" id="PTHR11048:SF28">
    <property type="entry name" value="4-HYDROXYBENZOATE POLYPRENYLTRANSFERASE, MITOCHONDRIAL"/>
    <property type="match status" value="1"/>
</dbReference>
<dbReference type="PANTHER" id="PTHR11048">
    <property type="entry name" value="PRENYLTRANSFERASES"/>
    <property type="match status" value="1"/>
</dbReference>
<dbReference type="Pfam" id="PF01040">
    <property type="entry name" value="UbiA"/>
    <property type="match status" value="1"/>
</dbReference>
<dbReference type="PROSITE" id="PS00943">
    <property type="entry name" value="UBIA"/>
    <property type="match status" value="1"/>
</dbReference>
<feature type="chain" id="PRO_1000088185" description="4-hydroxybenzoate octaprenyltransferase">
    <location>
        <begin position="1"/>
        <end position="286"/>
    </location>
</feature>
<feature type="transmembrane region" description="Helical" evidence="1">
    <location>
        <begin position="21"/>
        <end position="40"/>
    </location>
</feature>
<feature type="transmembrane region" description="Helical" evidence="1">
    <location>
        <begin position="95"/>
        <end position="115"/>
    </location>
</feature>
<feature type="transmembrane region" description="Helical" evidence="1">
    <location>
        <begin position="142"/>
        <end position="162"/>
    </location>
</feature>
<feature type="transmembrane region" description="Helical" evidence="1">
    <location>
        <begin position="167"/>
        <end position="187"/>
    </location>
</feature>
<feature type="transmembrane region" description="Helical" evidence="1">
    <location>
        <begin position="211"/>
        <end position="231"/>
    </location>
</feature>
<feature type="transmembrane region" description="Helical" evidence="1">
    <location>
        <begin position="235"/>
        <end position="255"/>
    </location>
</feature>
<feature type="transmembrane region" description="Helical" evidence="1">
    <location>
        <begin position="266"/>
        <end position="286"/>
    </location>
</feature>
<name>UBIA_SHEPC</name>
<accession>A4YAV1</accession>
<reference key="1">
    <citation type="submission" date="2007-04" db="EMBL/GenBank/DDBJ databases">
        <title>Complete sequence of Shewanella putrefaciens CN-32.</title>
        <authorList>
            <consortium name="US DOE Joint Genome Institute"/>
            <person name="Copeland A."/>
            <person name="Lucas S."/>
            <person name="Lapidus A."/>
            <person name="Barry K."/>
            <person name="Detter J.C."/>
            <person name="Glavina del Rio T."/>
            <person name="Hammon N."/>
            <person name="Israni S."/>
            <person name="Dalin E."/>
            <person name="Tice H."/>
            <person name="Pitluck S."/>
            <person name="Chain P."/>
            <person name="Malfatti S."/>
            <person name="Shin M."/>
            <person name="Vergez L."/>
            <person name="Schmutz J."/>
            <person name="Larimer F."/>
            <person name="Land M."/>
            <person name="Hauser L."/>
            <person name="Kyrpides N."/>
            <person name="Mikhailova N."/>
            <person name="Romine M.F."/>
            <person name="Fredrickson J."/>
            <person name="Tiedje J."/>
            <person name="Richardson P."/>
        </authorList>
    </citation>
    <scope>NUCLEOTIDE SEQUENCE [LARGE SCALE GENOMIC DNA]</scope>
    <source>
        <strain>CN-32 / ATCC BAA-453</strain>
    </source>
</reference>
<evidence type="ECO:0000255" key="1">
    <source>
        <dbReference type="HAMAP-Rule" id="MF_01635"/>
    </source>
</evidence>